<reference key="1">
    <citation type="journal article" date="2008" name="Nature">
        <title>The draft genome of the transgenic tropical fruit tree papaya (Carica papaya Linnaeus).</title>
        <authorList>
            <person name="Ming R."/>
            <person name="Hou S."/>
            <person name="Feng Y."/>
            <person name="Yu Q."/>
            <person name="Dionne-Laporte A."/>
            <person name="Saw J.H."/>
            <person name="Senin P."/>
            <person name="Wang W."/>
            <person name="Ly B.V."/>
            <person name="Lewis K.L."/>
            <person name="Salzberg S.L."/>
            <person name="Feng L."/>
            <person name="Jones M.R."/>
            <person name="Skelton R.L."/>
            <person name="Murray J.E."/>
            <person name="Chen C."/>
            <person name="Qian W."/>
            <person name="Shen J."/>
            <person name="Du P."/>
            <person name="Eustice M."/>
            <person name="Tong E."/>
            <person name="Tang H."/>
            <person name="Lyons E."/>
            <person name="Paull R.E."/>
            <person name="Michael T.P."/>
            <person name="Wall K."/>
            <person name="Rice D.W."/>
            <person name="Albert H."/>
            <person name="Wang M.L."/>
            <person name="Zhu Y.J."/>
            <person name="Schatz M."/>
            <person name="Nagarajan N."/>
            <person name="Acob R.A."/>
            <person name="Guan P."/>
            <person name="Blas A."/>
            <person name="Wai C.M."/>
            <person name="Ackerman C.M."/>
            <person name="Ren Y."/>
            <person name="Liu C."/>
            <person name="Wang J."/>
            <person name="Wang J."/>
            <person name="Na J.K."/>
            <person name="Shakirov E.V."/>
            <person name="Haas B."/>
            <person name="Thimmapuram J."/>
            <person name="Nelson D."/>
            <person name="Wang X."/>
            <person name="Bowers J.E."/>
            <person name="Gschwend A.R."/>
            <person name="Delcher A.L."/>
            <person name="Singh R."/>
            <person name="Suzuki J.Y."/>
            <person name="Tripathi S."/>
            <person name="Neupane K."/>
            <person name="Wei H."/>
            <person name="Irikura B."/>
            <person name="Paidi M."/>
            <person name="Jiang N."/>
            <person name="Zhang W."/>
            <person name="Presting G."/>
            <person name="Windsor A."/>
            <person name="Navajas-Perez R."/>
            <person name="Torres M.J."/>
            <person name="Feltus F.A."/>
            <person name="Porter B."/>
            <person name="Li Y."/>
            <person name="Burroughs A.M."/>
            <person name="Luo M.C."/>
            <person name="Liu L."/>
            <person name="Christopher D.A."/>
            <person name="Mount S.M."/>
            <person name="Moore P.H."/>
            <person name="Sugimura T."/>
            <person name="Jiang J."/>
            <person name="Schuler M.A."/>
            <person name="Friedman V."/>
            <person name="Mitchell-Olds T."/>
            <person name="Shippen D.E."/>
            <person name="dePamphilis C.W."/>
            <person name="Palmer J.D."/>
            <person name="Freeling M."/>
            <person name="Paterson A.H."/>
            <person name="Gonsalves D."/>
            <person name="Wang L."/>
            <person name="Alam M."/>
        </authorList>
    </citation>
    <scope>NUCLEOTIDE SEQUENCE [LARGE SCALE GENOMIC DNA]</scope>
    <source>
        <strain>cv. SunUp</strain>
    </source>
</reference>
<accession>B1A983</accession>
<sequence>MIFSTLEHILIHISFSVVSIVITIYFLTLLVDEIVGLYDSSDKGMIVTFFCITGLLAARWIYSGHFPLSNLYESLIFLSWSFSIIHMVCYFNKKHKNNLNAITGPSAILTQGFATSGLLNKMSQSVILVPALQSQWLMMHVSMMVLGYAALLCGSLLSVALLVITFRKVIRIFGKSNNFLNESFSFGKIQYMNERSNILLNTSFLSSRNYYRYQLIQQLDHWSYRIISLGFIFLTIGILSGAVWANEAWGSYWNWDPKETWAFITWTIFAIYLHIRTNINLGGINSAIVASMGFLIIWICYFGVNLLGIGLHSYGSFTLT</sequence>
<evidence type="ECO:0000255" key="1">
    <source>
        <dbReference type="HAMAP-Rule" id="MF_01391"/>
    </source>
</evidence>
<name>CCSA_CARPA</name>
<dbReference type="EMBL" id="EU431223">
    <property type="protein sequence ID" value="ABY86838.1"/>
    <property type="molecule type" value="Genomic_DNA"/>
</dbReference>
<dbReference type="RefSeq" id="YP_001671731.1">
    <property type="nucleotide sequence ID" value="NC_010323.1"/>
</dbReference>
<dbReference type="SMR" id="B1A983"/>
<dbReference type="GeneID" id="5878391"/>
<dbReference type="KEGG" id="cpap:5878391"/>
<dbReference type="OrthoDB" id="1640at2759"/>
<dbReference type="GO" id="GO:0009535">
    <property type="term" value="C:chloroplast thylakoid membrane"/>
    <property type="evidence" value="ECO:0007669"/>
    <property type="project" value="UniProtKB-SubCell"/>
</dbReference>
<dbReference type="GO" id="GO:0005886">
    <property type="term" value="C:plasma membrane"/>
    <property type="evidence" value="ECO:0007669"/>
    <property type="project" value="TreeGrafter"/>
</dbReference>
<dbReference type="GO" id="GO:0020037">
    <property type="term" value="F:heme binding"/>
    <property type="evidence" value="ECO:0007669"/>
    <property type="project" value="InterPro"/>
</dbReference>
<dbReference type="GO" id="GO:0017004">
    <property type="term" value="P:cytochrome complex assembly"/>
    <property type="evidence" value="ECO:0007669"/>
    <property type="project" value="UniProtKB-UniRule"/>
</dbReference>
<dbReference type="HAMAP" id="MF_01391">
    <property type="entry name" value="CytC_CcsA"/>
    <property type="match status" value="1"/>
</dbReference>
<dbReference type="InterPro" id="IPR002541">
    <property type="entry name" value="Cyt_c_assembly"/>
</dbReference>
<dbReference type="InterPro" id="IPR017562">
    <property type="entry name" value="Cyt_c_biogenesis_CcsA"/>
</dbReference>
<dbReference type="InterPro" id="IPR045062">
    <property type="entry name" value="Cyt_c_biogenesis_CcsA/CcmC"/>
</dbReference>
<dbReference type="NCBIfam" id="TIGR03144">
    <property type="entry name" value="cytochr_II_ccsB"/>
    <property type="match status" value="1"/>
</dbReference>
<dbReference type="PANTHER" id="PTHR30071:SF1">
    <property type="entry name" value="CYTOCHROME B_B6 PROTEIN-RELATED"/>
    <property type="match status" value="1"/>
</dbReference>
<dbReference type="PANTHER" id="PTHR30071">
    <property type="entry name" value="HEME EXPORTER PROTEIN C"/>
    <property type="match status" value="1"/>
</dbReference>
<dbReference type="Pfam" id="PF01578">
    <property type="entry name" value="Cytochrom_C_asm"/>
    <property type="match status" value="1"/>
</dbReference>
<protein>
    <recommendedName>
        <fullName evidence="1">Cytochrome c biogenesis protein CcsA</fullName>
    </recommendedName>
</protein>
<keyword id="KW-0150">Chloroplast</keyword>
<keyword id="KW-0201">Cytochrome c-type biogenesis</keyword>
<keyword id="KW-0472">Membrane</keyword>
<keyword id="KW-0934">Plastid</keyword>
<keyword id="KW-0793">Thylakoid</keyword>
<keyword id="KW-0812">Transmembrane</keyword>
<keyword id="KW-1133">Transmembrane helix</keyword>
<geneLocation type="chloroplast"/>
<gene>
    <name evidence="1" type="primary">ccsA</name>
</gene>
<proteinExistence type="inferred from homology"/>
<organism>
    <name type="scientific">Carica papaya</name>
    <name type="common">Papaya</name>
    <dbReference type="NCBI Taxonomy" id="3649"/>
    <lineage>
        <taxon>Eukaryota</taxon>
        <taxon>Viridiplantae</taxon>
        <taxon>Streptophyta</taxon>
        <taxon>Embryophyta</taxon>
        <taxon>Tracheophyta</taxon>
        <taxon>Spermatophyta</taxon>
        <taxon>Magnoliopsida</taxon>
        <taxon>eudicotyledons</taxon>
        <taxon>Gunneridae</taxon>
        <taxon>Pentapetalae</taxon>
        <taxon>rosids</taxon>
        <taxon>malvids</taxon>
        <taxon>Brassicales</taxon>
        <taxon>Caricaceae</taxon>
        <taxon>Carica</taxon>
    </lineage>
</organism>
<feature type="chain" id="PRO_0000353738" description="Cytochrome c biogenesis protein CcsA">
    <location>
        <begin position="1"/>
        <end position="320"/>
    </location>
</feature>
<feature type="transmembrane region" description="Helical" evidence="1">
    <location>
        <begin position="9"/>
        <end position="29"/>
    </location>
</feature>
<feature type="transmembrane region" description="Helical" evidence="1">
    <location>
        <begin position="44"/>
        <end position="64"/>
    </location>
</feature>
<feature type="transmembrane region" description="Helical" evidence="1">
    <location>
        <begin position="71"/>
        <end position="91"/>
    </location>
</feature>
<feature type="transmembrane region" description="Helical" evidence="1">
    <location>
        <begin position="99"/>
        <end position="119"/>
    </location>
</feature>
<feature type="transmembrane region" description="Helical" evidence="1">
    <location>
        <begin position="144"/>
        <end position="164"/>
    </location>
</feature>
<feature type="transmembrane region" description="Helical" evidence="1">
    <location>
        <begin position="226"/>
        <end position="246"/>
    </location>
</feature>
<feature type="transmembrane region" description="Helical" evidence="1">
    <location>
        <begin position="261"/>
        <end position="281"/>
    </location>
</feature>
<feature type="transmembrane region" description="Helical" evidence="1">
    <location>
        <begin position="287"/>
        <end position="307"/>
    </location>
</feature>
<comment type="function">
    <text evidence="1">Required during biogenesis of c-type cytochromes (cytochrome c6 and cytochrome f) at the step of heme attachment.</text>
</comment>
<comment type="subunit">
    <text evidence="1">May interact with Ccs1.</text>
</comment>
<comment type="subcellular location">
    <subcellularLocation>
        <location evidence="1">Plastid</location>
        <location evidence="1">Chloroplast thylakoid membrane</location>
        <topology evidence="1">Multi-pass membrane protein</topology>
    </subcellularLocation>
</comment>
<comment type="similarity">
    <text evidence="1">Belongs to the CcmF/CycK/Ccl1/NrfE/CcsA family.</text>
</comment>